<organismHost>
    <name type="scientific">Penicillium chrysogenum</name>
    <name type="common">Penicillium notatum</name>
    <dbReference type="NCBI Taxonomy" id="5076"/>
</organismHost>
<sequence>MTVSGRSSWQNGKTTNAMRAGKLATERDLESANYGSRSVEKLRHERAVGNLNKGRFLGMNKWSDEQLKHSMARYEDLAATRHNLFAVIMPSGCGKTSLARTYGMVDVDELVSRAEHDQYVEMRNEIVCGRGDWHDHNTLWFARLNQTLALLDYSVPVVIFVHTEETALEIGARPVACLTLETTAHEMNISGRGPKFREFSRESLRSCKPSNRVPNQYRFKSNKELEAFFLEVMNVSGLPVGAPFKYSTSIWNSSYSRDVPGWILRGERAGTQQVSINELRLLFEQGKIPKECVDYYVRASYVPTQFDFGVTMFEWSQALGQLPGCYNSRRDFDTLTDLMGVFPPHSPKEVTRSNVTLRTLCHTFDILSMPDAKEIASYHVGEGHTLVTNLLANWKGITQFTTVSHLVFPWFKVCERDWSDKMKTLHSLVRCSKFFMNTRITEKDRQALMYMDLLVGRGEYTVDEMAEVELRTDDTYNTKHLSYDPNRQVFTNQQYKKDFITSVEEAYVRLKIEPKPVNVDGFIDFYHRRASWLTKGGLVYNKLPPEMKKFGGQVFDAIYNTCREIQGRHNKKSLFEVYELAEVLQGANENNFNLTKTQIKYEVGKKDRTLLPGTLVHFVVFTYVLYLAEKQGQIGSVRLNTDSEVDIRYFDKKMCTGVFHVLYDWADFNEQHSAWEMGVVVDYLKHLIVAPRDYAVFVEAIVAGMYNMGLHDRDGNVHKIWRGLYSGWRGTTWINTVLNFCYVHIALQNVERLFGVRVVLYVDHGGDDIDLGLSEPAVMPWFLEVMDAMLFKANKWKQMFGTRSEFFRNTICDGRVYASPTRALASFVAGDWEGAGRATVKERVVSLLDQIAKLRRRGCSEELCQGLTIATISHWCRIKDGEDWLSLPAEIIHGHPDDGGLGVPDRDNNFWRLEEKVPEINEEWYKVVVPDYKASRDYVNVLARDVEKFSLVIEEREKLARKLSEDSYDIEKSVDHERWKHLLNFRTRVIAKELAVEPMEDSVVFEGFLEYEVEEGTEKKFDLASRYQEFVSYLSLNGRAITKEELLDLMSDGEVCLEAIEFQGDIYYARLVPEFIAYRATMFCKEAINKGVCDAISAQLFFRTICWMSASVFEHAI</sequence>
<reference key="1">
    <citation type="journal article" date="2003" name="J. Mol. Biol.">
        <title>Three-dimensional structure of penicillium chrysogenum virus: a double-stranded RNA virus with a genuine T=1 capsid.</title>
        <authorList>
            <person name="Caston J.R."/>
            <person name="Ghabrial S.A."/>
            <person name="Jiang D."/>
            <person name="Rivas G."/>
            <person name="Alfonso C."/>
            <person name="Roca R."/>
            <person name="Luque D."/>
            <person name="Carrascosa J.L."/>
        </authorList>
    </citation>
    <scope>NUCLEOTIDE SEQUENCE [GENOMIC RNA]</scope>
</reference>
<keyword id="KW-0378">Hydrolase</keyword>
<keyword id="KW-0547">Nucleotide-binding</keyword>
<keyword id="KW-0548">Nucleotidyltransferase</keyword>
<keyword id="KW-1185">Reference proteome</keyword>
<keyword id="KW-0696">RNA-directed RNA polymerase</keyword>
<keyword id="KW-0808">Transferase</keyword>
<protein>
    <recommendedName>
        <fullName>RNA-directed RNA polymerase</fullName>
        <ecNumber>2.7.7.48</ecNumber>
    </recommendedName>
</protein>
<evidence type="ECO:0000256" key="1">
    <source>
        <dbReference type="SAM" id="MobiDB-lite"/>
    </source>
</evidence>
<evidence type="ECO:0000305" key="2"/>
<feature type="chain" id="PRO_0000404268" description="RNA-directed RNA polymerase">
    <location>
        <begin position="1"/>
        <end position="1117"/>
    </location>
</feature>
<feature type="region of interest" description="Disordered" evidence="1">
    <location>
        <begin position="1"/>
        <end position="23"/>
    </location>
</feature>
<feature type="compositionally biased region" description="Polar residues" evidence="1">
    <location>
        <begin position="1"/>
        <end position="17"/>
    </location>
</feature>
<proteinExistence type="predicted"/>
<name>RDRP_PCVC</name>
<gene>
    <name type="primary">p1</name>
</gene>
<accession>Q8JVC2</accession>
<comment type="function">
    <text evidence="2">RNA-dependent RNA polymerase which replicates the viral genome.</text>
</comment>
<comment type="catalytic activity">
    <reaction>
        <text>RNA(n) + a ribonucleoside 5'-triphosphate = RNA(n+1) + diphosphate</text>
        <dbReference type="Rhea" id="RHEA:21248"/>
        <dbReference type="Rhea" id="RHEA-COMP:14527"/>
        <dbReference type="Rhea" id="RHEA-COMP:17342"/>
        <dbReference type="ChEBI" id="CHEBI:33019"/>
        <dbReference type="ChEBI" id="CHEBI:61557"/>
        <dbReference type="ChEBI" id="CHEBI:140395"/>
        <dbReference type="EC" id="2.7.7.48"/>
    </reaction>
</comment>
<dbReference type="EC" id="2.7.7.48"/>
<dbReference type="EMBL" id="AF296439">
    <property type="protein sequence ID" value="AAM95601.1"/>
    <property type="molecule type" value="Genomic_RNA"/>
</dbReference>
<dbReference type="RefSeq" id="YP_392482.1">
    <property type="nucleotide sequence ID" value="NC_007539.1"/>
</dbReference>
<dbReference type="KEGG" id="vg:5075912"/>
<dbReference type="Proteomes" id="UP000006714">
    <property type="component" value="Genome"/>
</dbReference>
<dbReference type="GO" id="GO:0016787">
    <property type="term" value="F:hydrolase activity"/>
    <property type="evidence" value="ECO:0007669"/>
    <property type="project" value="UniProtKB-KW"/>
</dbReference>
<dbReference type="GO" id="GO:0000166">
    <property type="term" value="F:nucleotide binding"/>
    <property type="evidence" value="ECO:0007669"/>
    <property type="project" value="UniProtKB-KW"/>
</dbReference>
<dbReference type="GO" id="GO:0003723">
    <property type="term" value="F:RNA binding"/>
    <property type="evidence" value="ECO:0007669"/>
    <property type="project" value="InterPro"/>
</dbReference>
<dbReference type="GO" id="GO:0003968">
    <property type="term" value="F:RNA-directed RNA polymerase activity"/>
    <property type="evidence" value="ECO:0007669"/>
    <property type="project" value="UniProtKB-KW"/>
</dbReference>
<dbReference type="GO" id="GO:0006351">
    <property type="term" value="P:DNA-templated transcription"/>
    <property type="evidence" value="ECO:0007669"/>
    <property type="project" value="InterPro"/>
</dbReference>
<dbReference type="InterPro" id="IPR043502">
    <property type="entry name" value="DNA/RNA_pol_sf"/>
</dbReference>
<dbReference type="InterPro" id="IPR001795">
    <property type="entry name" value="RNA-dir_pol_luteovirus"/>
</dbReference>
<dbReference type="Pfam" id="PF02123">
    <property type="entry name" value="RdRP_4"/>
    <property type="match status" value="1"/>
</dbReference>
<dbReference type="SUPFAM" id="SSF56672">
    <property type="entry name" value="DNA/RNA polymerases"/>
    <property type="match status" value="1"/>
</dbReference>
<organism>
    <name type="scientific">Penicillium chrysogenum virus (isolate Caston/2003)</name>
    <name type="common">PcV</name>
    <dbReference type="NCBI Taxonomy" id="654932"/>
    <lineage>
        <taxon>Viruses</taxon>
        <taxon>Riboviria</taxon>
        <taxon>Orthornavirae</taxon>
        <taxon>Duplornaviricota</taxon>
        <taxon>Chrymotiviricetes</taxon>
        <taxon>Ghabrivirales</taxon>
        <taxon>Chrysoviridae</taxon>
        <taxon>Alphachrysovirus</taxon>
        <taxon>Alphachrysovirus penicillii</taxon>
    </lineage>
</organism>